<dbReference type="EMBL" id="CU928158">
    <property type="protein sequence ID" value="CAQ88780.1"/>
    <property type="molecule type" value="Genomic_DNA"/>
</dbReference>
<dbReference type="RefSeq" id="WP_000156309.1">
    <property type="nucleotide sequence ID" value="NC_011740.1"/>
</dbReference>
<dbReference type="SMR" id="B7LPM7"/>
<dbReference type="KEGG" id="efe:EFER_1256"/>
<dbReference type="HOGENOM" id="CLU_133645_0_0_6"/>
<dbReference type="OrthoDB" id="2360740at2"/>
<dbReference type="Proteomes" id="UP000000745">
    <property type="component" value="Chromosome"/>
</dbReference>
<dbReference type="GO" id="GO:0005886">
    <property type="term" value="C:plasma membrane"/>
    <property type="evidence" value="ECO:0007669"/>
    <property type="project" value="UniProtKB-SubCell"/>
</dbReference>
<dbReference type="HAMAP" id="MF_01071">
    <property type="entry name" value="UPF0266"/>
    <property type="match status" value="1"/>
</dbReference>
<dbReference type="InterPro" id="IPR009328">
    <property type="entry name" value="DUF986"/>
</dbReference>
<dbReference type="NCBIfam" id="NF002791">
    <property type="entry name" value="PRK02913.1"/>
    <property type="match status" value="1"/>
</dbReference>
<dbReference type="Pfam" id="PF06173">
    <property type="entry name" value="DUF986"/>
    <property type="match status" value="1"/>
</dbReference>
<dbReference type="PIRSF" id="PIRSF020687">
    <property type="entry name" value="UCP020687"/>
    <property type="match status" value="1"/>
</dbReference>
<reference key="1">
    <citation type="journal article" date="2009" name="PLoS Genet.">
        <title>Organised genome dynamics in the Escherichia coli species results in highly diverse adaptive paths.</title>
        <authorList>
            <person name="Touchon M."/>
            <person name="Hoede C."/>
            <person name="Tenaillon O."/>
            <person name="Barbe V."/>
            <person name="Baeriswyl S."/>
            <person name="Bidet P."/>
            <person name="Bingen E."/>
            <person name="Bonacorsi S."/>
            <person name="Bouchier C."/>
            <person name="Bouvet O."/>
            <person name="Calteau A."/>
            <person name="Chiapello H."/>
            <person name="Clermont O."/>
            <person name="Cruveiller S."/>
            <person name="Danchin A."/>
            <person name="Diard M."/>
            <person name="Dossat C."/>
            <person name="Karoui M.E."/>
            <person name="Frapy E."/>
            <person name="Garry L."/>
            <person name="Ghigo J.M."/>
            <person name="Gilles A.M."/>
            <person name="Johnson J."/>
            <person name="Le Bouguenec C."/>
            <person name="Lescat M."/>
            <person name="Mangenot S."/>
            <person name="Martinez-Jehanne V."/>
            <person name="Matic I."/>
            <person name="Nassif X."/>
            <person name="Oztas S."/>
            <person name="Petit M.A."/>
            <person name="Pichon C."/>
            <person name="Rouy Z."/>
            <person name="Ruf C.S."/>
            <person name="Schneider D."/>
            <person name="Tourret J."/>
            <person name="Vacherie B."/>
            <person name="Vallenet D."/>
            <person name="Medigue C."/>
            <person name="Rocha E.P.C."/>
            <person name="Denamur E."/>
        </authorList>
    </citation>
    <scope>NUCLEOTIDE SEQUENCE [LARGE SCALE GENOMIC DNA]</scope>
    <source>
        <strain>ATCC 35469 / DSM 13698 / BCRC 15582 / CCUG 18766 / IAM 14443 / JCM 21226 / LMG 7866 / NBRC 102419 / NCTC 12128 / CDC 0568-73</strain>
    </source>
</reference>
<accession>B7LPM7</accession>
<name>YOBD_ESCF3</name>
<proteinExistence type="inferred from homology"/>
<organism>
    <name type="scientific">Escherichia fergusonii (strain ATCC 35469 / DSM 13698 / CCUG 18766 / IAM 14443 / JCM 21226 / LMG 7866 / NBRC 102419 / NCTC 12128 / CDC 0568-73)</name>
    <dbReference type="NCBI Taxonomy" id="585054"/>
    <lineage>
        <taxon>Bacteria</taxon>
        <taxon>Pseudomonadati</taxon>
        <taxon>Pseudomonadota</taxon>
        <taxon>Gammaproteobacteria</taxon>
        <taxon>Enterobacterales</taxon>
        <taxon>Enterobacteriaceae</taxon>
        <taxon>Escherichia</taxon>
    </lineage>
</organism>
<comment type="subcellular location">
    <subcellularLocation>
        <location evidence="1">Cell inner membrane</location>
        <topology evidence="1">Multi-pass membrane protein</topology>
    </subcellularLocation>
</comment>
<comment type="similarity">
    <text evidence="1">Belongs to the UPF0266 family.</text>
</comment>
<feature type="chain" id="PRO_1000136643" description="UPF0266 membrane protein YobD">
    <location>
        <begin position="1"/>
        <end position="152"/>
    </location>
</feature>
<feature type="transmembrane region" description="Helical" evidence="1">
    <location>
        <begin position="6"/>
        <end position="26"/>
    </location>
</feature>
<feature type="transmembrane region" description="Helical" evidence="1">
    <location>
        <begin position="45"/>
        <end position="65"/>
    </location>
</feature>
<feature type="transmembrane region" description="Helical" evidence="1">
    <location>
        <begin position="67"/>
        <end position="87"/>
    </location>
</feature>
<gene>
    <name evidence="1" type="primary">yobD</name>
    <name type="ordered locus">EFER_1256</name>
</gene>
<evidence type="ECO:0000255" key="1">
    <source>
        <dbReference type="HAMAP-Rule" id="MF_01071"/>
    </source>
</evidence>
<protein>
    <recommendedName>
        <fullName evidence="1">UPF0266 membrane protein YobD</fullName>
    </recommendedName>
</protein>
<keyword id="KW-0997">Cell inner membrane</keyword>
<keyword id="KW-1003">Cell membrane</keyword>
<keyword id="KW-0472">Membrane</keyword>
<keyword id="KW-0812">Transmembrane</keyword>
<keyword id="KW-1133">Transmembrane helix</keyword>
<sequence>MTITELVLILFIAALLAFAIYDQFIMPRRNGPTLLAIPLLRRGRIDSVIFVGLIVILIYNNVTNHGAQITTWLLSALALMGFYIFWIRVPKIIFKQKGFFFANVWIEYSRIKAMNLSEDGVLVMQLEQRRLLIRVRNIDDLEKIYKLLVSTQ</sequence>